<evidence type="ECO:0000250" key="1"/>
<evidence type="ECO:0000255" key="2">
    <source>
        <dbReference type="PROSITE-ProRule" id="PRU00028"/>
    </source>
</evidence>
<evidence type="ECO:0000305" key="3"/>
<reference key="1">
    <citation type="submission" date="2007-02" db="EMBL/GenBank/DDBJ databases">
        <title>Rhesus monkey gammaB-crystallin.</title>
        <authorList>
            <person name="Wistow G."/>
        </authorList>
    </citation>
    <scope>NUCLEOTIDE SEQUENCE [MRNA]</scope>
    <source>
        <tissue>Lens</tissue>
    </source>
</reference>
<feature type="chain" id="PRO_0000289607" description="Gamma-crystallin B">
    <location>
        <begin position="1"/>
        <end position="175"/>
    </location>
</feature>
<feature type="domain" description="Beta/gamma crystallin 'Greek key' 1" evidence="2">
    <location>
        <begin position="2"/>
        <end position="40"/>
    </location>
</feature>
<feature type="domain" description="Beta/gamma crystallin 'Greek key' 2" evidence="2">
    <location>
        <begin position="41"/>
        <end position="83"/>
    </location>
</feature>
<feature type="domain" description="Beta/gamma crystallin 'Greek key' 3" evidence="2">
    <location>
        <begin position="89"/>
        <end position="129"/>
    </location>
</feature>
<feature type="domain" description="Beta/gamma crystallin 'Greek key' 4" evidence="2">
    <location>
        <begin position="130"/>
        <end position="172"/>
    </location>
</feature>
<feature type="region of interest" description="Connecting peptide">
    <location>
        <begin position="84"/>
        <end position="88"/>
    </location>
</feature>
<name>CRGB_MACMU</name>
<comment type="function">
    <text evidence="1">Crystallins are the dominant structural components of the vertebrate eye lens.</text>
</comment>
<comment type="subunit">
    <text evidence="1">Monomer.</text>
</comment>
<comment type="domain">
    <text>Has a two-domain beta-structure, folded into four very similar Greek key motifs.</text>
</comment>
<comment type="similarity">
    <text evidence="3">Belongs to the beta/gamma-crystallin family.</text>
</comment>
<dbReference type="EMBL" id="EF426304">
    <property type="protein sequence ID" value="ABO14689.1"/>
    <property type="molecule type" value="mRNA"/>
</dbReference>
<dbReference type="RefSeq" id="NP_001076434.1">
    <property type="nucleotide sequence ID" value="NM_001082965.1"/>
</dbReference>
<dbReference type="SMR" id="A3RLD7"/>
<dbReference type="FunCoup" id="A3RLD7">
    <property type="interactions" value="4"/>
</dbReference>
<dbReference type="STRING" id="9544.ENSMMUP00000014245"/>
<dbReference type="PaxDb" id="9544-ENSMMUP00000014245"/>
<dbReference type="GeneID" id="711767"/>
<dbReference type="KEGG" id="mcc:711767"/>
<dbReference type="CTD" id="1419"/>
<dbReference type="eggNOG" id="ENOG502RXJY">
    <property type="taxonomic scope" value="Eukaryota"/>
</dbReference>
<dbReference type="HOGENOM" id="CLU_081883_1_1_1"/>
<dbReference type="InParanoid" id="A3RLD7"/>
<dbReference type="OrthoDB" id="8407241at2759"/>
<dbReference type="Proteomes" id="UP000006718">
    <property type="component" value="Unassembled WGS sequence"/>
</dbReference>
<dbReference type="GO" id="GO:0005212">
    <property type="term" value="F:structural constituent of eye lens"/>
    <property type="evidence" value="ECO:0000318"/>
    <property type="project" value="GO_Central"/>
</dbReference>
<dbReference type="GO" id="GO:0002088">
    <property type="term" value="P:lens development in camera-type eye"/>
    <property type="evidence" value="ECO:0000318"/>
    <property type="project" value="GO_Central"/>
</dbReference>
<dbReference type="GO" id="GO:0007601">
    <property type="term" value="P:visual perception"/>
    <property type="evidence" value="ECO:0000318"/>
    <property type="project" value="GO_Central"/>
</dbReference>
<dbReference type="FunFam" id="2.60.20.10:FF:000001">
    <property type="entry name" value="Crystallin gamma S"/>
    <property type="match status" value="1"/>
</dbReference>
<dbReference type="FunFam" id="2.60.20.10:FF:000003">
    <property type="entry name" value="Crystallin gamma S"/>
    <property type="match status" value="1"/>
</dbReference>
<dbReference type="Gene3D" id="2.60.20.10">
    <property type="entry name" value="Crystallins"/>
    <property type="match status" value="2"/>
</dbReference>
<dbReference type="InterPro" id="IPR050252">
    <property type="entry name" value="Beta/Gamma-Crystallin"/>
</dbReference>
<dbReference type="InterPro" id="IPR001064">
    <property type="entry name" value="Beta/gamma_crystallin"/>
</dbReference>
<dbReference type="InterPro" id="IPR011024">
    <property type="entry name" value="G_crystallin-like"/>
</dbReference>
<dbReference type="PANTHER" id="PTHR11818">
    <property type="entry name" value="BETA/GAMMA CRYSTALLIN"/>
    <property type="match status" value="1"/>
</dbReference>
<dbReference type="PANTHER" id="PTHR11818:SF101">
    <property type="entry name" value="GAMMA-CRYSTALLIN B"/>
    <property type="match status" value="1"/>
</dbReference>
<dbReference type="Pfam" id="PF00030">
    <property type="entry name" value="Crystall"/>
    <property type="match status" value="2"/>
</dbReference>
<dbReference type="PRINTS" id="PR01367">
    <property type="entry name" value="BGCRYSTALLIN"/>
</dbReference>
<dbReference type="SMART" id="SM00247">
    <property type="entry name" value="XTALbg"/>
    <property type="match status" value="2"/>
</dbReference>
<dbReference type="SUPFAM" id="SSF49695">
    <property type="entry name" value="gamma-Crystallin-like"/>
    <property type="match status" value="1"/>
</dbReference>
<dbReference type="PROSITE" id="PS50915">
    <property type="entry name" value="CRYSTALLIN_BETA_GAMMA"/>
    <property type="match status" value="4"/>
</dbReference>
<organism>
    <name type="scientific">Macaca mulatta</name>
    <name type="common">Rhesus macaque</name>
    <dbReference type="NCBI Taxonomy" id="9544"/>
    <lineage>
        <taxon>Eukaryota</taxon>
        <taxon>Metazoa</taxon>
        <taxon>Chordata</taxon>
        <taxon>Craniata</taxon>
        <taxon>Vertebrata</taxon>
        <taxon>Euteleostomi</taxon>
        <taxon>Mammalia</taxon>
        <taxon>Eutheria</taxon>
        <taxon>Euarchontoglires</taxon>
        <taxon>Primates</taxon>
        <taxon>Haplorrhini</taxon>
        <taxon>Catarrhini</taxon>
        <taxon>Cercopithecidae</taxon>
        <taxon>Cercopithecinae</taxon>
        <taxon>Macaca</taxon>
    </lineage>
</organism>
<accession>A3RLD7</accession>
<gene>
    <name type="primary">CRYGB</name>
</gene>
<protein>
    <recommendedName>
        <fullName>Gamma-crystallin B</fullName>
    </recommendedName>
    <alternativeName>
        <fullName>Gamma-B-crystallin</fullName>
    </alternativeName>
</protein>
<sequence>MGKITFYEDRAFQGRSYECTTDCPNLQPYFSRCNSIRVESGCWMIYERPNCQGHQYFLRRGEYPNYQQWMGLSDSIRSCHLIPPHSGTYRMKIYERDELRGQMSELTDDCLSVQDRFHLTEIHSLNVLEGSWILYEMPNYRGRQYLLRPGEYRRFLDWGAPNAKVGSLRRVMDLY</sequence>
<proteinExistence type="evidence at transcript level"/>
<keyword id="KW-0273">Eye lens protein</keyword>
<keyword id="KW-1185">Reference proteome</keyword>
<keyword id="KW-0677">Repeat</keyword>